<proteinExistence type="inferred from homology"/>
<comment type="function">
    <text evidence="1">Catalyzes the condensation reaction of fatty acid synthesis by the addition to an acyl acceptor of two carbons from malonyl-ACP. Catalyzes the first condensation reaction which initiates fatty acid synthesis and may therefore play a role in governing the total rate of fatty acid production. Possesses both acetoacetyl-ACP synthase and acetyl transacylase activities. Its substrate specificity determines the biosynthesis of branched-chain and/or straight-chain of fatty acids.</text>
</comment>
<comment type="catalytic activity">
    <reaction evidence="1">
        <text>malonyl-[ACP] + acetyl-CoA + H(+) = 3-oxobutanoyl-[ACP] + CO2 + CoA</text>
        <dbReference type="Rhea" id="RHEA:12080"/>
        <dbReference type="Rhea" id="RHEA-COMP:9623"/>
        <dbReference type="Rhea" id="RHEA-COMP:9625"/>
        <dbReference type="ChEBI" id="CHEBI:15378"/>
        <dbReference type="ChEBI" id="CHEBI:16526"/>
        <dbReference type="ChEBI" id="CHEBI:57287"/>
        <dbReference type="ChEBI" id="CHEBI:57288"/>
        <dbReference type="ChEBI" id="CHEBI:78449"/>
        <dbReference type="ChEBI" id="CHEBI:78450"/>
        <dbReference type="EC" id="2.3.1.180"/>
    </reaction>
</comment>
<comment type="pathway">
    <text evidence="1">Lipid metabolism; fatty acid biosynthesis.</text>
</comment>
<comment type="subunit">
    <text evidence="1">Homodimer.</text>
</comment>
<comment type="subcellular location">
    <subcellularLocation>
        <location evidence="1">Cytoplasm</location>
    </subcellularLocation>
</comment>
<comment type="domain">
    <text evidence="1">The last Arg residue of the ACP-binding site is essential for the weak association between ACP/AcpP and FabH.</text>
</comment>
<comment type="similarity">
    <text evidence="1">Belongs to the thiolase-like superfamily. FabH family.</text>
</comment>
<feature type="chain" id="PRO_1000056430" description="Beta-ketoacyl-[acyl-carrier-protein] synthase III">
    <location>
        <begin position="1"/>
        <end position="320"/>
    </location>
</feature>
<feature type="region of interest" description="ACP-binding" evidence="1">
    <location>
        <begin position="246"/>
        <end position="250"/>
    </location>
</feature>
<feature type="active site" evidence="1">
    <location>
        <position position="112"/>
    </location>
</feature>
<feature type="active site" evidence="1">
    <location>
        <position position="245"/>
    </location>
</feature>
<feature type="active site" evidence="1">
    <location>
        <position position="275"/>
    </location>
</feature>
<dbReference type="EC" id="2.3.1.180" evidence="1"/>
<dbReference type="EMBL" id="CP000023">
    <property type="protein sequence ID" value="AAV60101.1"/>
    <property type="molecule type" value="Genomic_DNA"/>
</dbReference>
<dbReference type="RefSeq" id="WP_011225526.1">
    <property type="nucleotide sequence ID" value="NC_006448.1"/>
</dbReference>
<dbReference type="SMR" id="Q5M5S1"/>
<dbReference type="STRING" id="264199.stu0382"/>
<dbReference type="KEGG" id="stl:stu0382"/>
<dbReference type="PATRIC" id="fig|264199.4.peg.389"/>
<dbReference type="eggNOG" id="COG0332">
    <property type="taxonomic scope" value="Bacteria"/>
</dbReference>
<dbReference type="HOGENOM" id="CLU_039592_4_1_9"/>
<dbReference type="UniPathway" id="UPA00094"/>
<dbReference type="Proteomes" id="UP000001170">
    <property type="component" value="Chromosome"/>
</dbReference>
<dbReference type="GO" id="GO:0005737">
    <property type="term" value="C:cytoplasm"/>
    <property type="evidence" value="ECO:0007669"/>
    <property type="project" value="UniProtKB-SubCell"/>
</dbReference>
<dbReference type="GO" id="GO:0004315">
    <property type="term" value="F:3-oxoacyl-[acyl-carrier-protein] synthase activity"/>
    <property type="evidence" value="ECO:0007669"/>
    <property type="project" value="InterPro"/>
</dbReference>
<dbReference type="GO" id="GO:0033818">
    <property type="term" value="F:beta-ketoacyl-acyl-carrier-protein synthase III activity"/>
    <property type="evidence" value="ECO:0007669"/>
    <property type="project" value="UniProtKB-UniRule"/>
</dbReference>
<dbReference type="GO" id="GO:0006633">
    <property type="term" value="P:fatty acid biosynthetic process"/>
    <property type="evidence" value="ECO:0007669"/>
    <property type="project" value="UniProtKB-UniRule"/>
</dbReference>
<dbReference type="CDD" id="cd00830">
    <property type="entry name" value="KAS_III"/>
    <property type="match status" value="1"/>
</dbReference>
<dbReference type="Gene3D" id="3.40.47.10">
    <property type="match status" value="1"/>
</dbReference>
<dbReference type="HAMAP" id="MF_01815">
    <property type="entry name" value="FabH"/>
    <property type="match status" value="1"/>
</dbReference>
<dbReference type="InterPro" id="IPR013747">
    <property type="entry name" value="ACP_syn_III_C"/>
</dbReference>
<dbReference type="InterPro" id="IPR013751">
    <property type="entry name" value="ACP_syn_III_N"/>
</dbReference>
<dbReference type="InterPro" id="IPR004655">
    <property type="entry name" value="FabH"/>
</dbReference>
<dbReference type="InterPro" id="IPR016039">
    <property type="entry name" value="Thiolase-like"/>
</dbReference>
<dbReference type="NCBIfam" id="TIGR00747">
    <property type="entry name" value="fabH"/>
    <property type="match status" value="1"/>
</dbReference>
<dbReference type="NCBIfam" id="NF006829">
    <property type="entry name" value="PRK09352.1"/>
    <property type="match status" value="1"/>
</dbReference>
<dbReference type="PANTHER" id="PTHR43091">
    <property type="entry name" value="3-OXOACYL-[ACYL-CARRIER-PROTEIN] SYNTHASE"/>
    <property type="match status" value="1"/>
</dbReference>
<dbReference type="PANTHER" id="PTHR43091:SF1">
    <property type="entry name" value="BETA-KETOACYL-[ACYL-CARRIER-PROTEIN] SYNTHASE III, CHLOROPLASTIC"/>
    <property type="match status" value="1"/>
</dbReference>
<dbReference type="Pfam" id="PF08545">
    <property type="entry name" value="ACP_syn_III"/>
    <property type="match status" value="1"/>
</dbReference>
<dbReference type="Pfam" id="PF08541">
    <property type="entry name" value="ACP_syn_III_C"/>
    <property type="match status" value="1"/>
</dbReference>
<dbReference type="SUPFAM" id="SSF53901">
    <property type="entry name" value="Thiolase-like"/>
    <property type="match status" value="1"/>
</dbReference>
<protein>
    <recommendedName>
        <fullName evidence="1">Beta-ketoacyl-[acyl-carrier-protein] synthase III</fullName>
        <shortName evidence="1">Beta-ketoacyl-ACP synthase III</shortName>
        <shortName evidence="1">KAS III</shortName>
        <ecNumber evidence="1">2.3.1.180</ecNumber>
    </recommendedName>
    <alternativeName>
        <fullName evidence="1">3-oxoacyl-[acyl-carrier-protein] synthase 3</fullName>
    </alternativeName>
    <alternativeName>
        <fullName evidence="1">3-oxoacyl-[acyl-carrier-protein] synthase III</fullName>
    </alternativeName>
</protein>
<accession>Q5M5S1</accession>
<keyword id="KW-0012">Acyltransferase</keyword>
<keyword id="KW-0963">Cytoplasm</keyword>
<keyword id="KW-0275">Fatty acid biosynthesis</keyword>
<keyword id="KW-0276">Fatty acid metabolism</keyword>
<keyword id="KW-0444">Lipid biosynthesis</keyword>
<keyword id="KW-0443">Lipid metabolism</keyword>
<keyword id="KW-0511">Multifunctional enzyme</keyword>
<keyword id="KW-1185">Reference proteome</keyword>
<keyword id="KW-0808">Transferase</keyword>
<reference key="1">
    <citation type="journal article" date="2004" name="Nat. Biotechnol.">
        <title>Complete sequence and comparative genome analysis of the dairy bacterium Streptococcus thermophilus.</title>
        <authorList>
            <person name="Bolotin A."/>
            <person name="Quinquis B."/>
            <person name="Renault P."/>
            <person name="Sorokin A."/>
            <person name="Ehrlich S.D."/>
            <person name="Kulakauskas S."/>
            <person name="Lapidus A."/>
            <person name="Goltsman E."/>
            <person name="Mazur M."/>
            <person name="Pusch G.D."/>
            <person name="Fonstein M."/>
            <person name="Overbeek R."/>
            <person name="Kyprides N."/>
            <person name="Purnelle B."/>
            <person name="Prozzi D."/>
            <person name="Ngui K."/>
            <person name="Masuy D."/>
            <person name="Hancy F."/>
            <person name="Burteau S."/>
            <person name="Boutry M."/>
            <person name="Delcour J."/>
            <person name="Goffeau A."/>
            <person name="Hols P."/>
        </authorList>
    </citation>
    <scope>NUCLEOTIDE SEQUENCE [LARGE SCALE GENOMIC DNA]</scope>
    <source>
        <strain>ATCC BAA-250 / LMG 18311</strain>
    </source>
</reference>
<evidence type="ECO:0000255" key="1">
    <source>
        <dbReference type="HAMAP-Rule" id="MF_01815"/>
    </source>
</evidence>
<name>FABH_STRT2</name>
<organism>
    <name type="scientific">Streptococcus thermophilus (strain ATCC BAA-250 / LMG 18311)</name>
    <dbReference type="NCBI Taxonomy" id="264199"/>
    <lineage>
        <taxon>Bacteria</taxon>
        <taxon>Bacillati</taxon>
        <taxon>Bacillota</taxon>
        <taxon>Bacilli</taxon>
        <taxon>Lactobacillales</taxon>
        <taxon>Streptococcaceae</taxon>
        <taxon>Streptococcus</taxon>
    </lineage>
</organism>
<gene>
    <name evidence="1" type="primary">fabH</name>
    <name type="ordered locus">stu0382</name>
</gene>
<sequence length="320" mass="34184">MAFAKISQVAHYAPAQVVTDDDLSKIMDTSDEWIRSRTGIQERRISLNENTSDLATNVAYQLLEKSGLSPEELDFVLVATISPDNSMPSVAARVQGTIGAVNAFAFDITAACSGFVFALATAEKLIKSGAYKKGLVIGAEVLSKTLDWSDRATAVLFGDGAGGVLLEESEEEHFFGESLNTDGSKGGLESGASAVISPYSDGTEQPNPYMQMDGKAIFDFAVKTVSKSIKALVEEKGEPDYFLLHQANIRILDTMAKKIDVSRDKFLANMMSYGNTSAASIPILLSENVANETLKLGSDQTILLSGFGGGLTWGSLIVKI</sequence>